<sequence length="255" mass="27751">MDELTKRVIPCLDIKGGRVVKGVQFVNLIDAGDPVSCAVAYEENKADELCFLDITASSDKRDILLHLVEEVANKLFIPFTVGGGIRTIEDVKAVLNKGADKVSINTSAFQNPKLLKDASEIYGSQCIVCAIDVKFHPERKRYEVYLNGGRAETGREALDWGKEAHEMGAGEILLTSMDKDGTKDGFDINLMKSFTSNLTIPIIASGGAGNPEHMAEVILRGGADAVLAASIFHFGEFSIQETKQTMKEMGIKVRL</sequence>
<feature type="chain" id="PRO_1000190577" description="Imidazole glycerol phosphate synthase subunit HisF">
    <location>
        <begin position="1"/>
        <end position="255"/>
    </location>
</feature>
<feature type="active site" evidence="1">
    <location>
        <position position="13"/>
    </location>
</feature>
<feature type="active site" evidence="1">
    <location>
        <position position="132"/>
    </location>
</feature>
<gene>
    <name evidence="1" type="primary">hisF</name>
    <name type="ordered locus">LEPBI_I1729</name>
</gene>
<name>HIS6_LEPBP</name>
<dbReference type="EC" id="4.3.2.10" evidence="1"/>
<dbReference type="EMBL" id="CP000786">
    <property type="protein sequence ID" value="ABZ97835.1"/>
    <property type="molecule type" value="Genomic_DNA"/>
</dbReference>
<dbReference type="RefSeq" id="WP_012388713.1">
    <property type="nucleotide sequence ID" value="NC_010602.1"/>
</dbReference>
<dbReference type="SMR" id="B0SRP0"/>
<dbReference type="STRING" id="456481.LEPBI_I1729"/>
<dbReference type="KEGG" id="lbi:LEPBI_I1729"/>
<dbReference type="HOGENOM" id="CLU_048577_4_0_12"/>
<dbReference type="OrthoDB" id="9781903at2"/>
<dbReference type="BioCyc" id="LBIF456481:LEPBI_RS08540-MONOMER"/>
<dbReference type="UniPathway" id="UPA00031">
    <property type="reaction ID" value="UER00010"/>
</dbReference>
<dbReference type="Proteomes" id="UP000001847">
    <property type="component" value="Chromosome I"/>
</dbReference>
<dbReference type="GO" id="GO:0005737">
    <property type="term" value="C:cytoplasm"/>
    <property type="evidence" value="ECO:0007669"/>
    <property type="project" value="UniProtKB-SubCell"/>
</dbReference>
<dbReference type="GO" id="GO:0000107">
    <property type="term" value="F:imidazoleglycerol-phosphate synthase activity"/>
    <property type="evidence" value="ECO:0007669"/>
    <property type="project" value="UniProtKB-UniRule"/>
</dbReference>
<dbReference type="GO" id="GO:0016829">
    <property type="term" value="F:lyase activity"/>
    <property type="evidence" value="ECO:0007669"/>
    <property type="project" value="UniProtKB-KW"/>
</dbReference>
<dbReference type="GO" id="GO:0000105">
    <property type="term" value="P:L-histidine biosynthetic process"/>
    <property type="evidence" value="ECO:0007669"/>
    <property type="project" value="UniProtKB-UniRule"/>
</dbReference>
<dbReference type="CDD" id="cd04731">
    <property type="entry name" value="HisF"/>
    <property type="match status" value="1"/>
</dbReference>
<dbReference type="FunFam" id="3.20.20.70:FF:000006">
    <property type="entry name" value="Imidazole glycerol phosphate synthase subunit HisF"/>
    <property type="match status" value="1"/>
</dbReference>
<dbReference type="Gene3D" id="3.20.20.70">
    <property type="entry name" value="Aldolase class I"/>
    <property type="match status" value="1"/>
</dbReference>
<dbReference type="HAMAP" id="MF_01013">
    <property type="entry name" value="HisF"/>
    <property type="match status" value="1"/>
</dbReference>
<dbReference type="InterPro" id="IPR013785">
    <property type="entry name" value="Aldolase_TIM"/>
</dbReference>
<dbReference type="InterPro" id="IPR006062">
    <property type="entry name" value="His_biosynth"/>
</dbReference>
<dbReference type="InterPro" id="IPR004651">
    <property type="entry name" value="HisF"/>
</dbReference>
<dbReference type="InterPro" id="IPR050064">
    <property type="entry name" value="IGPS_HisA/HisF"/>
</dbReference>
<dbReference type="InterPro" id="IPR011060">
    <property type="entry name" value="RibuloseP-bd_barrel"/>
</dbReference>
<dbReference type="NCBIfam" id="TIGR00735">
    <property type="entry name" value="hisF"/>
    <property type="match status" value="1"/>
</dbReference>
<dbReference type="PANTHER" id="PTHR21235:SF2">
    <property type="entry name" value="IMIDAZOLE GLYCEROL PHOSPHATE SYNTHASE HISHF"/>
    <property type="match status" value="1"/>
</dbReference>
<dbReference type="PANTHER" id="PTHR21235">
    <property type="entry name" value="IMIDAZOLE GLYCEROL PHOSPHATE SYNTHASE SUBUNIT HISF/H IGP SYNTHASE SUBUNIT HISF/H"/>
    <property type="match status" value="1"/>
</dbReference>
<dbReference type="Pfam" id="PF00977">
    <property type="entry name" value="His_biosynth"/>
    <property type="match status" value="1"/>
</dbReference>
<dbReference type="SUPFAM" id="SSF51366">
    <property type="entry name" value="Ribulose-phoshate binding barrel"/>
    <property type="match status" value="1"/>
</dbReference>
<organism>
    <name type="scientific">Leptospira biflexa serovar Patoc (strain Patoc 1 / ATCC 23582 / Paris)</name>
    <dbReference type="NCBI Taxonomy" id="456481"/>
    <lineage>
        <taxon>Bacteria</taxon>
        <taxon>Pseudomonadati</taxon>
        <taxon>Spirochaetota</taxon>
        <taxon>Spirochaetia</taxon>
        <taxon>Leptospirales</taxon>
        <taxon>Leptospiraceae</taxon>
        <taxon>Leptospira</taxon>
    </lineage>
</organism>
<protein>
    <recommendedName>
        <fullName evidence="1">Imidazole glycerol phosphate synthase subunit HisF</fullName>
        <ecNumber evidence="1">4.3.2.10</ecNumber>
    </recommendedName>
    <alternativeName>
        <fullName evidence="1">IGP synthase cyclase subunit</fullName>
    </alternativeName>
    <alternativeName>
        <fullName evidence="1">IGP synthase subunit HisF</fullName>
    </alternativeName>
    <alternativeName>
        <fullName evidence="1">ImGP synthase subunit HisF</fullName>
        <shortName evidence="1">IGPS subunit HisF</shortName>
    </alternativeName>
</protein>
<reference key="1">
    <citation type="journal article" date="2008" name="PLoS ONE">
        <title>Genome sequence of the saprophyte Leptospira biflexa provides insights into the evolution of Leptospira and the pathogenesis of leptospirosis.</title>
        <authorList>
            <person name="Picardeau M."/>
            <person name="Bulach D.M."/>
            <person name="Bouchier C."/>
            <person name="Zuerner R.L."/>
            <person name="Zidane N."/>
            <person name="Wilson P.J."/>
            <person name="Creno S."/>
            <person name="Kuczek E.S."/>
            <person name="Bommezzadri S."/>
            <person name="Davis J.C."/>
            <person name="McGrath A."/>
            <person name="Johnson M.J."/>
            <person name="Boursaux-Eude C."/>
            <person name="Seemann T."/>
            <person name="Rouy Z."/>
            <person name="Coppel R.L."/>
            <person name="Rood J.I."/>
            <person name="Lajus A."/>
            <person name="Davies J.K."/>
            <person name="Medigue C."/>
            <person name="Adler B."/>
        </authorList>
    </citation>
    <scope>NUCLEOTIDE SEQUENCE [LARGE SCALE GENOMIC DNA]</scope>
    <source>
        <strain>Patoc 1 / ATCC 23582 / Paris</strain>
    </source>
</reference>
<evidence type="ECO:0000255" key="1">
    <source>
        <dbReference type="HAMAP-Rule" id="MF_01013"/>
    </source>
</evidence>
<keyword id="KW-0028">Amino-acid biosynthesis</keyword>
<keyword id="KW-0963">Cytoplasm</keyword>
<keyword id="KW-0368">Histidine biosynthesis</keyword>
<keyword id="KW-0456">Lyase</keyword>
<keyword id="KW-1185">Reference proteome</keyword>
<comment type="function">
    <text evidence="1">IGPS catalyzes the conversion of PRFAR and glutamine to IGP, AICAR and glutamate. The HisF subunit catalyzes the cyclization activity that produces IGP and AICAR from PRFAR using the ammonia provided by the HisH subunit.</text>
</comment>
<comment type="catalytic activity">
    <reaction evidence="1">
        <text>5-[(5-phospho-1-deoxy-D-ribulos-1-ylimino)methylamino]-1-(5-phospho-beta-D-ribosyl)imidazole-4-carboxamide + L-glutamine = D-erythro-1-(imidazol-4-yl)glycerol 3-phosphate + 5-amino-1-(5-phospho-beta-D-ribosyl)imidazole-4-carboxamide + L-glutamate + H(+)</text>
        <dbReference type="Rhea" id="RHEA:24793"/>
        <dbReference type="ChEBI" id="CHEBI:15378"/>
        <dbReference type="ChEBI" id="CHEBI:29985"/>
        <dbReference type="ChEBI" id="CHEBI:58278"/>
        <dbReference type="ChEBI" id="CHEBI:58359"/>
        <dbReference type="ChEBI" id="CHEBI:58475"/>
        <dbReference type="ChEBI" id="CHEBI:58525"/>
        <dbReference type="EC" id="4.3.2.10"/>
    </reaction>
</comment>
<comment type="pathway">
    <text evidence="1">Amino-acid biosynthesis; L-histidine biosynthesis; L-histidine from 5-phospho-alpha-D-ribose 1-diphosphate: step 5/9.</text>
</comment>
<comment type="subunit">
    <text evidence="1">Heterodimer of HisH and HisF.</text>
</comment>
<comment type="subcellular location">
    <subcellularLocation>
        <location evidence="1">Cytoplasm</location>
    </subcellularLocation>
</comment>
<comment type="similarity">
    <text evidence="1">Belongs to the HisA/HisF family.</text>
</comment>
<accession>B0SRP0</accession>
<proteinExistence type="inferred from homology"/>